<evidence type="ECO:0000250" key="1"/>
<evidence type="ECO:0000250" key="2">
    <source>
        <dbReference type="UniProtKB" id="Q12441"/>
    </source>
</evidence>
<evidence type="ECO:0000256" key="3">
    <source>
        <dbReference type="SAM" id="MobiDB-lite"/>
    </source>
</evidence>
<evidence type="ECO:0000269" key="4">
    <source>
    </source>
</evidence>
<comment type="function">
    <text evidence="1">Capsid protein (CA) is the structural component of the virus-like particle (VLP), forming the shell that encapsulates the retrotransposons dimeric RNA genome. The particles are assembled from trimer-clustered units and there are holes in the capsid shells that allow for the diffusion of macromolecules. CA also has nucleocapsid-like chaperone activity, promoting primer tRNA(i)-Met annealing to the multipartite primer-binding site (PBS), dimerization of Ty1 RNA and initiation of reverse transcription (By similarity).</text>
</comment>
<comment type="subunit">
    <text evidence="1">Homotrimer.</text>
</comment>
<comment type="subcellular location">
    <subcellularLocation>
        <location evidence="1">Cytoplasm</location>
    </subcellularLocation>
</comment>
<comment type="alternative products">
    <event type="ribosomal frameshifting"/>
    <isoform>
        <id>Q12085-1</id>
        <name>Transposon Ty1-GR1 Gag polyprotein</name>
        <sequence type="displayed"/>
    </isoform>
    <isoform>
        <id>Q12141-1</id>
        <name>Transposon Ty1-GR1 Gag-Pol polyprotein</name>
        <sequence type="external"/>
    </isoform>
    <text evidence="1">The Gag-Pol polyprotein is generated by a +1 ribosomal frameshift. The ratio of Gag:Gag-Pol varies between 20:1 and 5:1 (By similarity).</text>
</comment>
<comment type="induction">
    <text evidence="4">Ty1-GR1 is a highly expressed element. Induced under amino acid starvation conditions by GCN4.</text>
</comment>
<comment type="domain">
    <text evidence="1">The C-terminal RNA-binding region of CA is sufficient for all its nucleocapsid-like chaperone activities.</text>
</comment>
<comment type="miscellaneous">
    <text>Retrotransposons are mobile genetic entities that are able to replicate via an RNA intermediate and a reverse transcription step. In contrast to retroviruses, retrotransposons are non-infectious, lack an envelope and remain intracellular. Ty1 retrotransposons belong to the copia elements (pseudoviridae).</text>
</comment>
<comment type="miscellaneous">
    <molecule>Isoform Transposon Ty1-GR1 Gag polyprotein</molecule>
    <text>Produced by conventional translation.</text>
</comment>
<sequence>MESQQLSQHSHISHGSACASVTSKEVHTNQDPLDVSASKTEECEKASTKANSQQTTTPASSAVPENPHHASPQTAQSHSPQNGPYPQQCMMTQNQANPSGWSFYGHPSMIPYTPYQMSPMYFPPGPQSQFPQYPSSVGTPLSTPSPESGNTFTDSSSADSDMTSTKKYVRPPPMLTSPNDFPNWVKTYIKFLQNSNLGGIIPTVNGKPVRQITDDELTFLYNTFQIFAPSQFLPTWVKDILSVDYTDIMKILSKSIEKMQSDTQEANDIVTLANLQYNGSTPADAFETKVTNIIDRLNNNGIHINNKVACQLIMRGLSGEYKFLRYTRHRHLNMTVAELFLDIHAIYEEQQGSRNSKPNYRRNLSDEKNDSRSYTNTTKPKVIARNPQKTNNSKSKTARAHNVSTSNNSPSTDNDSISKSTTEPIQLNNKHDLHLRPGTY</sequence>
<proteinExistence type="evidence at transcript level"/>
<accession>Q12085</accession>
<accession>D6VUG2</accession>
<gene>
    <name type="primary">TY1A-GR1</name>
    <name type="synonym">YGRWTy1-1 GAG</name>
    <name type="ordered locus">YGR027W-A</name>
    <name type="ORF">G4052</name>
</gene>
<dbReference type="EMBL" id="Z72812">
    <property type="protein sequence ID" value="CAA97011.1"/>
    <property type="molecule type" value="Genomic_DNA"/>
</dbReference>
<dbReference type="EMBL" id="Z72813">
    <property type="protein sequence ID" value="CAA97013.1"/>
    <property type="molecule type" value="Genomic_DNA"/>
</dbReference>
<dbReference type="EMBL" id="BK006941">
    <property type="protein sequence ID" value="DAA08123.1"/>
    <property type="molecule type" value="Genomic_DNA"/>
</dbReference>
<dbReference type="PIR" id="S69837">
    <property type="entry name" value="S69837"/>
</dbReference>
<dbReference type="RefSeq" id="NP_058159.1">
    <molecule id="Q12085-1"/>
    <property type="nucleotide sequence ID" value="NM_001184431.1"/>
</dbReference>
<dbReference type="SMR" id="Q12085"/>
<dbReference type="BioGRID" id="33269">
    <property type="interactions" value="136"/>
</dbReference>
<dbReference type="FunCoup" id="Q12085">
    <property type="interactions" value="63"/>
</dbReference>
<dbReference type="IntAct" id="Q12085">
    <property type="interactions" value="1"/>
</dbReference>
<dbReference type="GlyGen" id="Q12085">
    <property type="glycosylation" value="2 sites"/>
</dbReference>
<dbReference type="PaxDb" id="4932-YGR027W-A"/>
<dbReference type="PeptideAtlas" id="Q12085"/>
<dbReference type="GeneID" id="852912"/>
<dbReference type="KEGG" id="sce:YGR027W-A"/>
<dbReference type="AGR" id="SGD:S000007405"/>
<dbReference type="SGD" id="S000007405">
    <property type="gene designation" value="YGR027W-A"/>
</dbReference>
<dbReference type="VEuPathDB" id="FungiDB:YGR027W-A"/>
<dbReference type="eggNOG" id="KOG0017">
    <property type="taxonomic scope" value="Eukaryota"/>
</dbReference>
<dbReference type="HOGENOM" id="CLU_045291_1_0_1"/>
<dbReference type="InParanoid" id="Q12085"/>
<dbReference type="OrthoDB" id="4051386at2759"/>
<dbReference type="Proteomes" id="UP000002311">
    <property type="component" value="Chromosome VII"/>
</dbReference>
<dbReference type="RNAct" id="Q12085">
    <property type="molecule type" value="protein"/>
</dbReference>
<dbReference type="GO" id="GO:0005737">
    <property type="term" value="C:cytoplasm"/>
    <property type="evidence" value="ECO:0007669"/>
    <property type="project" value="UniProtKB-SubCell"/>
</dbReference>
<dbReference type="GO" id="GO:0003723">
    <property type="term" value="F:RNA binding"/>
    <property type="evidence" value="ECO:0007669"/>
    <property type="project" value="UniProtKB-KW"/>
</dbReference>
<dbReference type="GO" id="GO:0075523">
    <property type="term" value="P:viral translational frameshifting"/>
    <property type="evidence" value="ECO:0007669"/>
    <property type="project" value="UniProtKB-KW"/>
</dbReference>
<dbReference type="InterPro" id="IPR015820">
    <property type="entry name" value="TYA"/>
</dbReference>
<dbReference type="Pfam" id="PF01021">
    <property type="entry name" value="TYA"/>
    <property type="match status" value="1"/>
</dbReference>
<feature type="chain" id="PRO_0000279058" description="Transposon Ty1-GR1 Gag polyprotein">
    <location>
        <begin position="1"/>
        <end position="440"/>
    </location>
</feature>
<feature type="chain" id="PRO_0000279059" description="Capsid protein" evidence="1">
    <location>
        <begin position="1"/>
        <end position="401"/>
    </location>
</feature>
<feature type="peptide" id="PRO_0000279060" description="Gag-p4" evidence="1">
    <location>
        <begin position="402"/>
        <end position="440"/>
    </location>
</feature>
<feature type="region of interest" description="Disordered" evidence="3">
    <location>
        <begin position="1"/>
        <end position="93"/>
    </location>
</feature>
<feature type="region of interest" description="Disordered" evidence="3">
    <location>
        <begin position="126"/>
        <end position="173"/>
    </location>
</feature>
<feature type="region of interest" description="RNA-binding" evidence="1">
    <location>
        <begin position="299"/>
        <end position="401"/>
    </location>
</feature>
<feature type="region of interest" description="Disordered" evidence="3">
    <location>
        <begin position="352"/>
        <end position="440"/>
    </location>
</feature>
<feature type="compositionally biased region" description="Low complexity" evidence="3">
    <location>
        <begin position="1"/>
        <end position="16"/>
    </location>
</feature>
<feature type="compositionally biased region" description="Polar residues" evidence="3">
    <location>
        <begin position="48"/>
        <end position="60"/>
    </location>
</feature>
<feature type="compositionally biased region" description="Polar residues" evidence="3">
    <location>
        <begin position="71"/>
        <end position="93"/>
    </location>
</feature>
<feature type="compositionally biased region" description="Polar residues" evidence="3">
    <location>
        <begin position="127"/>
        <end position="152"/>
    </location>
</feature>
<feature type="compositionally biased region" description="Low complexity" evidence="3">
    <location>
        <begin position="153"/>
        <end position="165"/>
    </location>
</feature>
<feature type="compositionally biased region" description="Low complexity" evidence="3">
    <location>
        <begin position="402"/>
        <end position="418"/>
    </location>
</feature>
<feature type="compositionally biased region" description="Polar residues" evidence="3">
    <location>
        <begin position="419"/>
        <end position="428"/>
    </location>
</feature>
<feature type="compositionally biased region" description="Basic and acidic residues" evidence="3">
    <location>
        <begin position="429"/>
        <end position="440"/>
    </location>
</feature>
<feature type="site" description="Cleavage; by Ty1 protease" evidence="1">
    <location>
        <begin position="401"/>
        <end position="402"/>
    </location>
</feature>
<feature type="modified residue" description="Phosphoserine" evidence="2">
    <location>
        <position position="416"/>
    </location>
</feature>
<reference key="1">
    <citation type="journal article" date="1997" name="Nature">
        <title>The nucleotide sequence of Saccharomyces cerevisiae chromosome VII.</title>
        <authorList>
            <person name="Tettelin H."/>
            <person name="Agostoni-Carbone M.L."/>
            <person name="Albermann K."/>
            <person name="Albers M."/>
            <person name="Arroyo J."/>
            <person name="Backes U."/>
            <person name="Barreiros T."/>
            <person name="Bertani I."/>
            <person name="Bjourson A.J."/>
            <person name="Brueckner M."/>
            <person name="Bruschi C.V."/>
            <person name="Carignani G."/>
            <person name="Castagnoli L."/>
            <person name="Cerdan E."/>
            <person name="Clemente M.L."/>
            <person name="Coblenz A."/>
            <person name="Coglievina M."/>
            <person name="Coissac E."/>
            <person name="Defoor E."/>
            <person name="Del Bino S."/>
            <person name="Delius H."/>
            <person name="Delneri D."/>
            <person name="de Wergifosse P."/>
            <person name="Dujon B."/>
            <person name="Durand P."/>
            <person name="Entian K.-D."/>
            <person name="Eraso P."/>
            <person name="Escribano V."/>
            <person name="Fabiani L."/>
            <person name="Fartmann B."/>
            <person name="Feroli F."/>
            <person name="Feuermann M."/>
            <person name="Frontali L."/>
            <person name="Garcia-Gonzalez M."/>
            <person name="Garcia-Saez M.I."/>
            <person name="Goffeau A."/>
            <person name="Guerreiro P."/>
            <person name="Hani J."/>
            <person name="Hansen M."/>
            <person name="Hebling U."/>
            <person name="Hernandez K."/>
            <person name="Heumann K."/>
            <person name="Hilger F."/>
            <person name="Hofmann B."/>
            <person name="Indge K.J."/>
            <person name="James C.M."/>
            <person name="Klima R."/>
            <person name="Koetter P."/>
            <person name="Kramer B."/>
            <person name="Kramer W."/>
            <person name="Lauquin G."/>
            <person name="Leuther H."/>
            <person name="Louis E.J."/>
            <person name="Maillier E."/>
            <person name="Marconi A."/>
            <person name="Martegani E."/>
            <person name="Mazon M.J."/>
            <person name="Mazzoni C."/>
            <person name="McReynolds A.D.K."/>
            <person name="Melchioretto P."/>
            <person name="Mewes H.-W."/>
            <person name="Minenkova O."/>
            <person name="Mueller-Auer S."/>
            <person name="Nawrocki A."/>
            <person name="Netter P."/>
            <person name="Neu R."/>
            <person name="Nombela C."/>
            <person name="Oliver S.G."/>
            <person name="Panzeri L."/>
            <person name="Paoluzi S."/>
            <person name="Plevani P."/>
            <person name="Portetelle D."/>
            <person name="Portillo F."/>
            <person name="Potier S."/>
            <person name="Purnelle B."/>
            <person name="Rieger M."/>
            <person name="Riles L."/>
            <person name="Rinaldi T."/>
            <person name="Robben J."/>
            <person name="Rodrigues-Pousada C."/>
            <person name="Rodriguez-Belmonte E."/>
            <person name="Rodriguez-Torres A.M."/>
            <person name="Rose M."/>
            <person name="Ruzzi M."/>
            <person name="Saliola M."/>
            <person name="Sanchez-Perez M."/>
            <person name="Schaefer B."/>
            <person name="Schaefer M."/>
            <person name="Scharfe M."/>
            <person name="Schmidheini T."/>
            <person name="Schreer A."/>
            <person name="Skala J."/>
            <person name="Souciet J.-L."/>
            <person name="Steensma H.Y."/>
            <person name="Talla E."/>
            <person name="Thierry A."/>
            <person name="Vandenbol M."/>
            <person name="van der Aart Q.J.M."/>
            <person name="Van Dyck L."/>
            <person name="Vanoni M."/>
            <person name="Verhasselt P."/>
            <person name="Voet M."/>
            <person name="Volckaert G."/>
            <person name="Wambutt R."/>
            <person name="Watson M.D."/>
            <person name="Weber N."/>
            <person name="Wedler E."/>
            <person name="Wedler H."/>
            <person name="Wipfli P."/>
            <person name="Wolf K."/>
            <person name="Wright L.F."/>
            <person name="Zaccaria P."/>
            <person name="Zimmermann M."/>
            <person name="Zollner A."/>
            <person name="Kleine K."/>
        </authorList>
    </citation>
    <scope>NUCLEOTIDE SEQUENCE [LARGE SCALE GENOMIC DNA]</scope>
    <source>
        <strain>ATCC 204508 / S288c</strain>
    </source>
</reference>
<reference key="2">
    <citation type="journal article" date="2014" name="G3 (Bethesda)">
        <title>The reference genome sequence of Saccharomyces cerevisiae: Then and now.</title>
        <authorList>
            <person name="Engel S.R."/>
            <person name="Dietrich F.S."/>
            <person name="Fisk D.G."/>
            <person name="Binkley G."/>
            <person name="Balakrishnan R."/>
            <person name="Costanzo M.C."/>
            <person name="Dwight S.S."/>
            <person name="Hitz B.C."/>
            <person name="Karra K."/>
            <person name="Nash R.S."/>
            <person name="Weng S."/>
            <person name="Wong E.D."/>
            <person name="Lloyd P."/>
            <person name="Skrzypek M.S."/>
            <person name="Miyasato S.R."/>
            <person name="Simison M."/>
            <person name="Cherry J.M."/>
        </authorList>
    </citation>
    <scope>GENOME REANNOTATION</scope>
    <source>
        <strain>ATCC 204508 / S288c</strain>
    </source>
</reference>
<reference key="3">
    <citation type="journal article" date="1998" name="Genome Res.">
        <title>Transposable elements and genome organization: a comprehensive survey of retrotransposons revealed by the complete Saccharomyces cerevisiae genome sequence.</title>
        <authorList>
            <person name="Kim J.M."/>
            <person name="Vanguri S."/>
            <person name="Boeke J.D."/>
            <person name="Gabriel A."/>
            <person name="Voytas D.F."/>
        </authorList>
    </citation>
    <scope>NOMENCLATURE</scope>
</reference>
<reference key="4">
    <citation type="journal article" date="2002" name="Mol. Cell. Biol.">
        <title>Differential effects of chromatin and Gcn4 on the 50-fold range of expression among individual yeast Ty1 retrotransposons.</title>
        <authorList>
            <person name="Morillon A."/>
            <person name="Benard L."/>
            <person name="Springer M."/>
            <person name="Lesage P."/>
        </authorList>
    </citation>
    <scope>INDUCTION</scope>
</reference>
<reference key="5">
    <citation type="journal article" date="2005" name="Cytogenet. Genome Res.">
        <title>Happy together: the life and times of Ty retrotransposons and their hosts.</title>
        <authorList>
            <person name="Lesage P."/>
            <person name="Todeschini A.L."/>
        </authorList>
    </citation>
    <scope>REVIEW</scope>
</reference>
<name>YG11A_YEAST</name>
<protein>
    <recommendedName>
        <fullName>Transposon Ty1-GR1 Gag polyprotein</fullName>
    </recommendedName>
    <alternativeName>
        <fullName>Gag-p49</fullName>
    </alternativeName>
    <alternativeName>
        <fullName>Transposon Ty1 protein A</fullName>
        <shortName>TY1A</shortName>
        <shortName>TYA</shortName>
    </alternativeName>
    <alternativeName>
        <fullName>p58</fullName>
    </alternativeName>
    <component>
        <recommendedName>
            <fullName>Capsid protein</fullName>
            <shortName>CA</shortName>
        </recommendedName>
        <alternativeName>
            <fullName>Gag-p45</fullName>
        </alternativeName>
        <alternativeName>
            <fullName>p54</fullName>
        </alternativeName>
    </component>
    <component>
        <recommendedName>
            <fullName>Gag-p4</fullName>
        </recommendedName>
    </component>
</protein>
<keyword id="KW-0963">Cytoplasm</keyword>
<keyword id="KW-0597">Phosphoprotein</keyword>
<keyword id="KW-1185">Reference proteome</keyword>
<keyword id="KW-0688">Ribosomal frameshifting</keyword>
<keyword id="KW-0694">RNA-binding</keyword>
<keyword id="KW-0814">Transposable element</keyword>
<organism>
    <name type="scientific">Saccharomyces cerevisiae (strain ATCC 204508 / S288c)</name>
    <name type="common">Baker's yeast</name>
    <dbReference type="NCBI Taxonomy" id="559292"/>
    <lineage>
        <taxon>Eukaryota</taxon>
        <taxon>Fungi</taxon>
        <taxon>Dikarya</taxon>
        <taxon>Ascomycota</taxon>
        <taxon>Saccharomycotina</taxon>
        <taxon>Saccharomycetes</taxon>
        <taxon>Saccharomycetales</taxon>
        <taxon>Saccharomycetaceae</taxon>
        <taxon>Saccharomyces</taxon>
    </lineage>
</organism>